<feature type="chain" id="PRO_0000244571" description="Serine/threonine-protein phosphatase 6 regulatory ankyrin repeat subunit A">
    <location>
        <begin position="1"/>
        <end position="1053"/>
    </location>
</feature>
<feature type="repeat" description="ANK 1">
    <location>
        <begin position="40"/>
        <end position="69"/>
    </location>
</feature>
<feature type="repeat" description="ANK 2">
    <location>
        <begin position="73"/>
        <end position="102"/>
    </location>
</feature>
<feature type="repeat" description="ANK 3">
    <location>
        <begin position="106"/>
        <end position="135"/>
    </location>
</feature>
<feature type="repeat" description="ANK 4">
    <location>
        <begin position="139"/>
        <end position="168"/>
    </location>
</feature>
<feature type="repeat" description="ANK 5">
    <location>
        <begin position="172"/>
        <end position="201"/>
    </location>
</feature>
<feature type="repeat" description="ANK 6">
    <location>
        <begin position="205"/>
        <end position="234"/>
    </location>
</feature>
<feature type="repeat" description="ANK 7">
    <location>
        <begin position="238"/>
        <end position="267"/>
    </location>
</feature>
<feature type="repeat" description="ANK 8">
    <location>
        <begin position="271"/>
        <end position="301"/>
    </location>
</feature>
<feature type="repeat" description="ANK 9">
    <location>
        <begin position="305"/>
        <end position="334"/>
    </location>
</feature>
<feature type="repeat" description="ANK 10">
    <location>
        <begin position="338"/>
        <end position="367"/>
    </location>
</feature>
<feature type="repeat" description="ANK 11">
    <location>
        <begin position="371"/>
        <end position="400"/>
    </location>
</feature>
<feature type="repeat" description="ANK 12">
    <location>
        <begin position="404"/>
        <end position="433"/>
    </location>
</feature>
<feature type="repeat" description="ANK 13">
    <location>
        <begin position="437"/>
        <end position="466"/>
    </location>
</feature>
<feature type="repeat" description="ANK 14">
    <location>
        <begin position="470"/>
        <end position="500"/>
    </location>
</feature>
<feature type="repeat" description="ANK 15">
    <location>
        <begin position="504"/>
        <end position="534"/>
    </location>
</feature>
<feature type="repeat" description="ANK 16">
    <location>
        <begin position="549"/>
        <end position="578"/>
    </location>
</feature>
<feature type="repeat" description="ANK 17">
    <location>
        <begin position="582"/>
        <end position="611"/>
    </location>
</feature>
<feature type="repeat" description="ANK 18">
    <location>
        <begin position="616"/>
        <end position="645"/>
    </location>
</feature>
<feature type="repeat" description="ANK 19">
    <location>
        <begin position="652"/>
        <end position="681"/>
    </location>
</feature>
<feature type="repeat" description="ANK 20">
    <location>
        <begin position="685"/>
        <end position="714"/>
    </location>
</feature>
<feature type="repeat" description="ANK 21">
    <location>
        <begin position="718"/>
        <end position="747"/>
    </location>
</feature>
<feature type="repeat" description="ANK 22">
    <location>
        <begin position="755"/>
        <end position="786"/>
    </location>
</feature>
<feature type="repeat" description="ANK 23">
    <location>
        <begin position="788"/>
        <end position="817"/>
    </location>
</feature>
<feature type="repeat" description="ANK 24">
    <location>
        <begin position="822"/>
        <end position="851"/>
    </location>
</feature>
<feature type="repeat" description="ANK 25">
    <location>
        <begin position="855"/>
        <end position="885"/>
    </location>
</feature>
<feature type="repeat" description="ANK 26">
    <location>
        <begin position="889"/>
        <end position="918"/>
    </location>
</feature>
<feature type="repeat" description="ANK 27">
    <location>
        <begin position="925"/>
        <end position="954"/>
    </location>
</feature>
<feature type="modified residue" description="Phosphoserine" evidence="1">
    <location>
        <position position="1007"/>
    </location>
</feature>
<feature type="modified residue" description="Phosphoserine" evidence="3">
    <location>
        <position position="1011"/>
    </location>
</feature>
<proteinExistence type="evidence at protein level"/>
<comment type="function">
    <text evidence="1">Putative regulatory subunit of protein phosphatase 6 (PP6) that may be involved in the recognition of phosphoprotein substrates. Involved in the PP6-mediated dephosphorylation of NFKBIE opposing its degradation in response to TNF-alpha. Selectively inhibits the phosphatase activity of PPP1C. Targets PPP1C to modulate HNRPK phosphorylation (By similarity). Involved in the PP6-mediated dephosphorylation of MOB1 and induced focal adhesion assembly during cell migration (By similarity).</text>
</comment>
<comment type="subunit">
    <text evidence="1">Protein phosphatase 6 (PP6) holoenzyme is proposed to be a heterotrimeric complex formed by the catalytic subunit, a SAPS domain-containing subunit (PP6R) and an ankyrin repeat-domain containing regulatory subunit (ARS). Interacts with PPP1C and HNRPK. Interacts with PPP6C, PPP6R1 and PPP6R3 (By similarity).</text>
</comment>
<comment type="subcellular location">
    <subcellularLocation>
        <location evidence="1">Nucleus</location>
        <location evidence="1">Nucleoplasm</location>
    </subcellularLocation>
    <subcellularLocation>
        <location evidence="1">Cytoplasm</location>
        <location evidence="1">Cytosol</location>
    </subcellularLocation>
    <subcellularLocation>
        <location evidence="1">Cell projection</location>
        <location evidence="1">Lamellipodium</location>
    </subcellularLocation>
    <text evidence="1">Seems to be excluded from nucleoli. Mostly localized in the cytosol, but a fraction could be observed at the lamellipodia (By similarity).</text>
</comment>
<comment type="tissue specificity">
    <text evidence="2">Widely expressed (at protein level).</text>
</comment>
<comment type="PTM">
    <text evidence="1">Ubiquitinated by the ECS(RAB40C) complex leading to its degradation and decreased PP6 activity.</text>
</comment>
<evidence type="ECO:0000250" key="1">
    <source>
        <dbReference type="UniProtKB" id="O15084"/>
    </source>
</evidence>
<evidence type="ECO:0000269" key="2">
    <source>
    </source>
</evidence>
<evidence type="ECO:0007744" key="3">
    <source>
    </source>
</evidence>
<reference key="1">
    <citation type="journal article" date="2004" name="Genome Res.">
        <title>The status, quality, and expansion of the NIH full-length cDNA project: the Mammalian Gene Collection (MGC).</title>
        <authorList>
            <consortium name="The MGC Project Team"/>
        </authorList>
    </citation>
    <scope>NUCLEOTIDE SEQUENCE [LARGE SCALE MRNA]</scope>
    <source>
        <strain>C57BL/6J</strain>
        <tissue>Brain</tissue>
        <tissue>Olfactory epithelium</tissue>
    </source>
</reference>
<reference key="2">
    <citation type="journal article" date="2006" name="Cell. Signal.">
        <title>PITK, a PP1 targeting subunit that modulates the phosphorylation of the transcriptional regulator hnRNP K.</title>
        <authorList>
            <person name="Kwiek N.C."/>
            <person name="Thacker D.F."/>
            <person name="Datto M.B."/>
            <person name="Megosh H.B."/>
            <person name="Haystead T.A.J."/>
        </authorList>
    </citation>
    <scope>TISSUE SPECIFICITY</scope>
</reference>
<reference key="3">
    <citation type="journal article" date="2010" name="Cell">
        <title>A tissue-specific atlas of mouse protein phosphorylation and expression.</title>
        <authorList>
            <person name="Huttlin E.L."/>
            <person name="Jedrychowski M.P."/>
            <person name="Elias J.E."/>
            <person name="Goswami T."/>
            <person name="Rad R."/>
            <person name="Beausoleil S.A."/>
            <person name="Villen J."/>
            <person name="Haas W."/>
            <person name="Sowa M.E."/>
            <person name="Gygi S.P."/>
        </authorList>
    </citation>
    <scope>PHOSPHORYLATION [LARGE SCALE ANALYSIS] AT SER-1011</scope>
    <scope>IDENTIFICATION BY MASS SPECTROMETRY [LARGE SCALE ANALYSIS]</scope>
    <source>
        <tissue>Brain</tissue>
        <tissue>Brown adipose tissue</tissue>
        <tissue>Heart</tissue>
        <tissue>Kidney</tissue>
        <tissue>Liver</tissue>
        <tissue>Pancreas</tissue>
        <tissue>Testis</tissue>
    </source>
</reference>
<dbReference type="EMBL" id="BC094609">
    <property type="protein sequence ID" value="AAH94609.1"/>
    <property type="molecule type" value="mRNA"/>
</dbReference>
<dbReference type="EMBL" id="BC051456">
    <property type="protein sequence ID" value="AAH51456.1"/>
    <property type="molecule type" value="mRNA"/>
</dbReference>
<dbReference type="CCDS" id="CCDS36858.1"/>
<dbReference type="RefSeq" id="NP_001019775.1">
    <property type="nucleotide sequence ID" value="NM_001024604.3"/>
</dbReference>
<dbReference type="SMR" id="Q505D1"/>
<dbReference type="BioGRID" id="222872">
    <property type="interactions" value="13"/>
</dbReference>
<dbReference type="FunCoup" id="Q505D1">
    <property type="interactions" value="188"/>
</dbReference>
<dbReference type="IntAct" id="Q505D1">
    <property type="interactions" value="12"/>
</dbReference>
<dbReference type="STRING" id="10090.ENSMUSP00000014640"/>
<dbReference type="GlyGen" id="Q505D1">
    <property type="glycosylation" value="2 sites, 1 O-linked glycan (2 sites)"/>
</dbReference>
<dbReference type="iPTMnet" id="Q505D1"/>
<dbReference type="PhosphoSitePlus" id="Q505D1"/>
<dbReference type="SwissPalm" id="Q505D1"/>
<dbReference type="jPOST" id="Q505D1"/>
<dbReference type="PaxDb" id="10090-ENSMUSP00000014640"/>
<dbReference type="PeptideAtlas" id="Q505D1"/>
<dbReference type="ProteomicsDB" id="296256"/>
<dbReference type="Pumba" id="Q505D1"/>
<dbReference type="Antibodypedia" id="26857">
    <property type="antibodies" value="112 antibodies from 22 providers"/>
</dbReference>
<dbReference type="DNASU" id="105522"/>
<dbReference type="Ensembl" id="ENSMUST00000014640.9">
    <property type="protein sequence ID" value="ENSMUSP00000014640.8"/>
    <property type="gene ID" value="ENSMUSG00000014496.9"/>
</dbReference>
<dbReference type="GeneID" id="105522"/>
<dbReference type="KEGG" id="mmu:105522"/>
<dbReference type="UCSC" id="uc007sxz.1">
    <property type="organism name" value="mouse"/>
</dbReference>
<dbReference type="AGR" id="MGI:2145661"/>
<dbReference type="CTD" id="23243"/>
<dbReference type="MGI" id="MGI:2145661">
    <property type="gene designation" value="Ankrd28"/>
</dbReference>
<dbReference type="VEuPathDB" id="HostDB:ENSMUSG00000014496"/>
<dbReference type="eggNOG" id="KOG0504">
    <property type="taxonomic scope" value="Eukaryota"/>
</dbReference>
<dbReference type="GeneTree" id="ENSGT00950000182908"/>
<dbReference type="HOGENOM" id="CLU_000134_58_0_1"/>
<dbReference type="InParanoid" id="Q505D1"/>
<dbReference type="OMA" id="AMDGHTD"/>
<dbReference type="OrthoDB" id="6506523at2759"/>
<dbReference type="PhylomeDB" id="Q505D1"/>
<dbReference type="TreeFam" id="TF312824"/>
<dbReference type="Reactome" id="R-MMU-171319">
    <property type="pathway name" value="Telomere Extension By Telomerase"/>
</dbReference>
<dbReference type="Reactome" id="R-MMU-204005">
    <property type="pathway name" value="COPII-mediated vesicle transport"/>
</dbReference>
<dbReference type="BioGRID-ORCS" id="105522">
    <property type="hits" value="2 hits in 77 CRISPR screens"/>
</dbReference>
<dbReference type="ChiTaRS" id="Ankrd28">
    <property type="organism name" value="mouse"/>
</dbReference>
<dbReference type="PRO" id="PR:Q505D1"/>
<dbReference type="Proteomes" id="UP000000589">
    <property type="component" value="Chromosome 14"/>
</dbReference>
<dbReference type="RNAct" id="Q505D1">
    <property type="molecule type" value="protein"/>
</dbReference>
<dbReference type="Bgee" id="ENSMUSG00000014496">
    <property type="expression patterns" value="Expressed in plantaris and 259 other cell types or tissues"/>
</dbReference>
<dbReference type="ExpressionAtlas" id="Q505D1">
    <property type="expression patterns" value="baseline and differential"/>
</dbReference>
<dbReference type="GO" id="GO:0005654">
    <property type="term" value="C:nucleoplasm"/>
    <property type="evidence" value="ECO:0007669"/>
    <property type="project" value="UniProtKB-SubCell"/>
</dbReference>
<dbReference type="FunFam" id="1.25.40.20:FF:000330">
    <property type="entry name" value="Ankyrin repeat domain 28, isoform CRA_c"/>
    <property type="match status" value="1"/>
</dbReference>
<dbReference type="FunFam" id="1.25.40.20:FF:000288">
    <property type="entry name" value="Serine/threonine-protein phosphatase 6 regulatory ankyrin repeat subunit A"/>
    <property type="match status" value="1"/>
</dbReference>
<dbReference type="FunFam" id="1.25.40.20:FF:000405">
    <property type="entry name" value="Serine/threonine-protein phosphatase 6 regulatory ankyrin repeat subunit A"/>
    <property type="match status" value="1"/>
</dbReference>
<dbReference type="FunFam" id="1.25.40.20:FF:000597">
    <property type="entry name" value="Serine/threonine-protein phosphatase 6 regulatory ankyrin repeat subunit A"/>
    <property type="match status" value="1"/>
</dbReference>
<dbReference type="Gene3D" id="1.25.40.20">
    <property type="entry name" value="Ankyrin repeat-containing domain"/>
    <property type="match status" value="11"/>
</dbReference>
<dbReference type="InterPro" id="IPR002110">
    <property type="entry name" value="Ankyrin_rpt"/>
</dbReference>
<dbReference type="InterPro" id="IPR036770">
    <property type="entry name" value="Ankyrin_rpt-contain_sf"/>
</dbReference>
<dbReference type="PANTHER" id="PTHR24198">
    <property type="entry name" value="ANKYRIN REPEAT AND PROTEIN KINASE DOMAIN-CONTAINING PROTEIN"/>
    <property type="match status" value="1"/>
</dbReference>
<dbReference type="PANTHER" id="PTHR24198:SF192">
    <property type="entry name" value="SERINE_THREONINE-PROTEIN PHOSPHATASE 6 REGULATORY ANKYRIN REPEAT SUBUNIT A"/>
    <property type="match status" value="1"/>
</dbReference>
<dbReference type="Pfam" id="PF00023">
    <property type="entry name" value="Ank"/>
    <property type="match status" value="5"/>
</dbReference>
<dbReference type="Pfam" id="PF12796">
    <property type="entry name" value="Ank_2"/>
    <property type="match status" value="7"/>
</dbReference>
<dbReference type="Pfam" id="PF13637">
    <property type="entry name" value="Ank_4"/>
    <property type="match status" value="1"/>
</dbReference>
<dbReference type="PRINTS" id="PR01415">
    <property type="entry name" value="ANKYRIN"/>
</dbReference>
<dbReference type="SMART" id="SM00248">
    <property type="entry name" value="ANK"/>
    <property type="match status" value="28"/>
</dbReference>
<dbReference type="SUPFAM" id="SSF48403">
    <property type="entry name" value="Ankyrin repeat"/>
    <property type="match status" value="4"/>
</dbReference>
<dbReference type="PROSITE" id="PS50297">
    <property type="entry name" value="ANK_REP_REGION"/>
    <property type="match status" value="1"/>
</dbReference>
<dbReference type="PROSITE" id="PS50088">
    <property type="entry name" value="ANK_REPEAT"/>
    <property type="match status" value="24"/>
</dbReference>
<name>ANR28_MOUSE</name>
<keyword id="KW-0040">ANK repeat</keyword>
<keyword id="KW-0966">Cell projection</keyword>
<keyword id="KW-0963">Cytoplasm</keyword>
<keyword id="KW-0539">Nucleus</keyword>
<keyword id="KW-0597">Phosphoprotein</keyword>
<keyword id="KW-1185">Reference proteome</keyword>
<keyword id="KW-0677">Repeat</keyword>
<keyword id="KW-0832">Ubl conjugation</keyword>
<organism>
    <name type="scientific">Mus musculus</name>
    <name type="common">Mouse</name>
    <dbReference type="NCBI Taxonomy" id="10090"/>
    <lineage>
        <taxon>Eukaryota</taxon>
        <taxon>Metazoa</taxon>
        <taxon>Chordata</taxon>
        <taxon>Craniata</taxon>
        <taxon>Vertebrata</taxon>
        <taxon>Euteleostomi</taxon>
        <taxon>Mammalia</taxon>
        <taxon>Eutheria</taxon>
        <taxon>Euarchontoglires</taxon>
        <taxon>Glires</taxon>
        <taxon>Rodentia</taxon>
        <taxon>Myomorpha</taxon>
        <taxon>Muroidea</taxon>
        <taxon>Muridae</taxon>
        <taxon>Murinae</taxon>
        <taxon>Mus</taxon>
        <taxon>Mus</taxon>
    </lineage>
</organism>
<gene>
    <name type="primary">Ankrd28</name>
</gene>
<sequence>MAFLKLRDQPSLVQAIFNGDPDEVRALIFKKEDVNFQDNEKRTPLHAAAYLGDAEIIELLILSGARVNAKDSKWLTPLHRAVASCSEEAVQILLKHSADVNARDKNWQTPLHIAAANKAVKCAESLVPLLSNVNVSDRAGRTALHHAAFSGHGEMVKLLLSRGANINAFDKKDRRAIHWAAYMGHIEVVKLLVSHGAEVTCKDKKSYTPLHAAASSGMISVVKYLLDLGVDMNEPNAYGNTPLHVACYNGQDVVVNELIDCGANVNQKNEKGFTPLHFAAASTHGALCLELLVGNGADVNMKSKDGKTPLHMTALHGRFSRSQTIIQSGAVIDCEDKNGNTPLHIAARYGHELLINTLITSGADTAKRGIHGMFPLHLAALSGFSDCCRKLLSSGFDIDTPDDFGRTCLHAAAAGGNLECLNLLLNTGADFNKKDKFGRSPLHYAAANCNYQCLFALVGSGASVNDLDERGCTPLHYAATSDTDGKCLEYLLRNDANPGIRDKQGYNAVHYSAAYGHRLCLQLIASETPLDVLMETSGTDMLSDSDNRATISPLHLAAYHGHHQALEVLVQSLLDLDVRNSSGRTPLDLAAFKGHVECVDVLINQGASILVKDYVLKRTPIHAAATNGHSECLRLLIGNAEPQNAVDIQDGNGQTPLMLSVLNGHTDCVYSLLNKGANVDAKDKWGRTALHRGAVTGHEECVDALLQHGAKCLLRDSRGRTPIHLSAACGHIGVLGALLQSATSVDANPAVVDNHGYTALHWACYNGHETCVELLLEQDVFQKIDGNAFSPLHCAVINDNEGAAEMLIDSLGASIVNATDSKGRTPLHAAAFTDHVECLQLLLSQNAQVNSADSTGKTPLMMAAENGQTNTVEMLVSSASADLTLQDKSKNTALHLACGKGHETSALLILEKITDRNLINATNAALQTPLHVAARNGLTMVVQELLGKGASVLAVDENGYTPALACAPNKDVADCLALILATMMPVSSSSPLTSLTFNAINRYTNTSKTVSFEALPIMRNEASSYCSFNNIGGEQEYLYTDVDELNDSDSETY</sequence>
<protein>
    <recommendedName>
        <fullName>Serine/threonine-protein phosphatase 6 regulatory ankyrin repeat subunit A</fullName>
        <shortName>PP6-ARS-A</shortName>
        <shortName>Serine/threonine-protein phosphatase 6 regulatory subunit ARS-A</shortName>
    </recommendedName>
    <alternativeName>
        <fullName>Ankyrin repeat domain-containing protein 28</fullName>
    </alternativeName>
    <alternativeName>
        <fullName>Phosphatase interactor targeting protein hnRNP K</fullName>
        <shortName>PITK</shortName>
    </alternativeName>
</protein>
<accession>Q505D1</accession>